<reference key="1">
    <citation type="submission" date="2009-01" db="EMBL/GenBank/DDBJ databases">
        <title>Complete sequence of Diaphorobacter sp. TPSY.</title>
        <authorList>
            <consortium name="US DOE Joint Genome Institute"/>
            <person name="Lucas S."/>
            <person name="Copeland A."/>
            <person name="Lapidus A."/>
            <person name="Glavina del Rio T."/>
            <person name="Tice H."/>
            <person name="Bruce D."/>
            <person name="Goodwin L."/>
            <person name="Pitluck S."/>
            <person name="Chertkov O."/>
            <person name="Brettin T."/>
            <person name="Detter J.C."/>
            <person name="Han C."/>
            <person name="Larimer F."/>
            <person name="Land M."/>
            <person name="Hauser L."/>
            <person name="Kyrpides N."/>
            <person name="Mikhailova N."/>
            <person name="Coates J.D."/>
        </authorList>
    </citation>
    <scope>NUCLEOTIDE SEQUENCE [LARGE SCALE GENOMIC DNA]</scope>
    <source>
        <strain>TPSY</strain>
    </source>
</reference>
<feature type="chain" id="PRO_1000164941" description="CTP synthase">
    <location>
        <begin position="1"/>
        <end position="552"/>
    </location>
</feature>
<feature type="domain" description="Glutamine amidotransferase type-1" evidence="1">
    <location>
        <begin position="295"/>
        <end position="548"/>
    </location>
</feature>
<feature type="region of interest" description="Amidoligase domain" evidence="1">
    <location>
        <begin position="1"/>
        <end position="270"/>
    </location>
</feature>
<feature type="active site" description="Nucleophile; for glutamine hydrolysis" evidence="1">
    <location>
        <position position="384"/>
    </location>
</feature>
<feature type="active site" evidence="1">
    <location>
        <position position="521"/>
    </location>
</feature>
<feature type="active site" evidence="1">
    <location>
        <position position="523"/>
    </location>
</feature>
<feature type="binding site" evidence="1">
    <location>
        <position position="13"/>
    </location>
    <ligand>
        <name>CTP</name>
        <dbReference type="ChEBI" id="CHEBI:37563"/>
        <note>allosteric inhibitor</note>
    </ligand>
</feature>
<feature type="binding site" evidence="1">
    <location>
        <position position="13"/>
    </location>
    <ligand>
        <name>UTP</name>
        <dbReference type="ChEBI" id="CHEBI:46398"/>
    </ligand>
</feature>
<feature type="binding site" evidence="1">
    <location>
        <begin position="14"/>
        <end position="19"/>
    </location>
    <ligand>
        <name>ATP</name>
        <dbReference type="ChEBI" id="CHEBI:30616"/>
    </ligand>
</feature>
<feature type="binding site" evidence="1">
    <location>
        <position position="71"/>
    </location>
    <ligand>
        <name>ATP</name>
        <dbReference type="ChEBI" id="CHEBI:30616"/>
    </ligand>
</feature>
<feature type="binding site" evidence="1">
    <location>
        <position position="71"/>
    </location>
    <ligand>
        <name>Mg(2+)</name>
        <dbReference type="ChEBI" id="CHEBI:18420"/>
    </ligand>
</feature>
<feature type="binding site" evidence="1">
    <location>
        <position position="144"/>
    </location>
    <ligand>
        <name>Mg(2+)</name>
        <dbReference type="ChEBI" id="CHEBI:18420"/>
    </ligand>
</feature>
<feature type="binding site" evidence="1">
    <location>
        <begin position="151"/>
        <end position="153"/>
    </location>
    <ligand>
        <name>CTP</name>
        <dbReference type="ChEBI" id="CHEBI:37563"/>
        <note>allosteric inhibitor</note>
    </ligand>
</feature>
<feature type="binding site" evidence="1">
    <location>
        <begin position="191"/>
        <end position="196"/>
    </location>
    <ligand>
        <name>CTP</name>
        <dbReference type="ChEBI" id="CHEBI:37563"/>
        <note>allosteric inhibitor</note>
    </ligand>
</feature>
<feature type="binding site" evidence="1">
    <location>
        <begin position="191"/>
        <end position="196"/>
    </location>
    <ligand>
        <name>UTP</name>
        <dbReference type="ChEBI" id="CHEBI:46398"/>
    </ligand>
</feature>
<feature type="binding site" evidence="1">
    <location>
        <position position="227"/>
    </location>
    <ligand>
        <name>CTP</name>
        <dbReference type="ChEBI" id="CHEBI:37563"/>
        <note>allosteric inhibitor</note>
    </ligand>
</feature>
<feature type="binding site" evidence="1">
    <location>
        <position position="227"/>
    </location>
    <ligand>
        <name>UTP</name>
        <dbReference type="ChEBI" id="CHEBI:46398"/>
    </ligand>
</feature>
<feature type="binding site" evidence="1">
    <location>
        <position position="357"/>
    </location>
    <ligand>
        <name>L-glutamine</name>
        <dbReference type="ChEBI" id="CHEBI:58359"/>
    </ligand>
</feature>
<feature type="binding site" evidence="1">
    <location>
        <begin position="385"/>
        <end position="388"/>
    </location>
    <ligand>
        <name>L-glutamine</name>
        <dbReference type="ChEBI" id="CHEBI:58359"/>
    </ligand>
</feature>
<feature type="binding site" evidence="1">
    <location>
        <position position="408"/>
    </location>
    <ligand>
        <name>L-glutamine</name>
        <dbReference type="ChEBI" id="CHEBI:58359"/>
    </ligand>
</feature>
<feature type="binding site" evidence="1">
    <location>
        <position position="474"/>
    </location>
    <ligand>
        <name>L-glutamine</name>
        <dbReference type="ChEBI" id="CHEBI:58359"/>
    </ligand>
</feature>
<name>PYRG_ACIET</name>
<sequence length="552" mass="60933">MTKFVFVTGGVVSSLGKGIASASLAAILESRGLKVTLIKLDPYINVDPGTMSPFQHGEVFVTDDGAETDLDLGHYERFIETRMKQANNFTTGRIYQSVLEKERRGDYLGKTVQVIPHVTNEIQEFIKRGAGIGTPDAVDVAICEVGGTVGDIESLPFLEAVRQLSLKLGPNNSAFVHLTYLPWIAAAGELKTKPTQHTVQKLREIGIQPDALLCRALHAVPEEEKEKISLFTNVAEWGVISMWDVDTIYKVPRMLHEQGLDGLICDKLRLNTPPANLKRWDDLVYETEHPRGEVQIAMVGKYVELSDAYKSVNEALKHAGMQSHVRVKITHLDSETITDDNAAQQLAQYDAILVPGGFGSRGVEGKISTARYAREHKVPYLGICLGMQVATIEYARHVAGLAGANSTEFDAHCKHPVIALITEWKDEDGTIKTRDANSDLGGTMRLGAQSSDVQPGTLAHSIYGDVVTERHRHRYEANVQYLDKLRTAGLVISALTQREHLTEIVELPKSVHPWYIGVQFHPEFKSTPWSGHPLFNAFIKAAVEHQKPAAKA</sequence>
<organism>
    <name type="scientific">Acidovorax ebreus (strain TPSY)</name>
    <name type="common">Diaphorobacter sp. (strain TPSY)</name>
    <dbReference type="NCBI Taxonomy" id="535289"/>
    <lineage>
        <taxon>Bacteria</taxon>
        <taxon>Pseudomonadati</taxon>
        <taxon>Pseudomonadota</taxon>
        <taxon>Betaproteobacteria</taxon>
        <taxon>Burkholderiales</taxon>
        <taxon>Comamonadaceae</taxon>
        <taxon>Diaphorobacter</taxon>
    </lineage>
</organism>
<gene>
    <name evidence="1" type="primary">pyrG</name>
    <name type="ordered locus">Dtpsy_0915</name>
</gene>
<keyword id="KW-0067">ATP-binding</keyword>
<keyword id="KW-0315">Glutamine amidotransferase</keyword>
<keyword id="KW-0436">Ligase</keyword>
<keyword id="KW-0460">Magnesium</keyword>
<keyword id="KW-0479">Metal-binding</keyword>
<keyword id="KW-0547">Nucleotide-binding</keyword>
<keyword id="KW-0665">Pyrimidine biosynthesis</keyword>
<keyword id="KW-1185">Reference proteome</keyword>
<proteinExistence type="inferred from homology"/>
<comment type="function">
    <text evidence="1">Catalyzes the ATP-dependent amination of UTP to CTP with either L-glutamine or ammonia as the source of nitrogen. Regulates intracellular CTP levels through interactions with the four ribonucleotide triphosphates.</text>
</comment>
<comment type="catalytic activity">
    <reaction evidence="1">
        <text>UTP + L-glutamine + ATP + H2O = CTP + L-glutamate + ADP + phosphate + 2 H(+)</text>
        <dbReference type="Rhea" id="RHEA:26426"/>
        <dbReference type="ChEBI" id="CHEBI:15377"/>
        <dbReference type="ChEBI" id="CHEBI:15378"/>
        <dbReference type="ChEBI" id="CHEBI:29985"/>
        <dbReference type="ChEBI" id="CHEBI:30616"/>
        <dbReference type="ChEBI" id="CHEBI:37563"/>
        <dbReference type="ChEBI" id="CHEBI:43474"/>
        <dbReference type="ChEBI" id="CHEBI:46398"/>
        <dbReference type="ChEBI" id="CHEBI:58359"/>
        <dbReference type="ChEBI" id="CHEBI:456216"/>
        <dbReference type="EC" id="6.3.4.2"/>
    </reaction>
</comment>
<comment type="catalytic activity">
    <reaction evidence="1">
        <text>L-glutamine + H2O = L-glutamate + NH4(+)</text>
        <dbReference type="Rhea" id="RHEA:15889"/>
        <dbReference type="ChEBI" id="CHEBI:15377"/>
        <dbReference type="ChEBI" id="CHEBI:28938"/>
        <dbReference type="ChEBI" id="CHEBI:29985"/>
        <dbReference type="ChEBI" id="CHEBI:58359"/>
    </reaction>
</comment>
<comment type="catalytic activity">
    <reaction evidence="1">
        <text>UTP + NH4(+) + ATP = CTP + ADP + phosphate + 2 H(+)</text>
        <dbReference type="Rhea" id="RHEA:16597"/>
        <dbReference type="ChEBI" id="CHEBI:15378"/>
        <dbReference type="ChEBI" id="CHEBI:28938"/>
        <dbReference type="ChEBI" id="CHEBI:30616"/>
        <dbReference type="ChEBI" id="CHEBI:37563"/>
        <dbReference type="ChEBI" id="CHEBI:43474"/>
        <dbReference type="ChEBI" id="CHEBI:46398"/>
        <dbReference type="ChEBI" id="CHEBI:456216"/>
    </reaction>
</comment>
<comment type="activity regulation">
    <text evidence="1">Allosterically activated by GTP, when glutamine is the substrate; GTP has no effect on the reaction when ammonia is the substrate. The allosteric effector GTP functions by stabilizing the protein conformation that binds the tetrahedral intermediate(s) formed during glutamine hydrolysis. Inhibited by the product CTP, via allosteric rather than competitive inhibition.</text>
</comment>
<comment type="pathway">
    <text evidence="1">Pyrimidine metabolism; CTP biosynthesis via de novo pathway; CTP from UDP: step 2/2.</text>
</comment>
<comment type="subunit">
    <text evidence="1">Homotetramer.</text>
</comment>
<comment type="miscellaneous">
    <text evidence="1">CTPSs have evolved a hybrid strategy for distinguishing between UTP and CTP. The overlapping regions of the product feedback inhibitory and substrate sites recognize a common feature in both compounds, the triphosphate moiety. To differentiate isosteric substrate and product pyrimidine rings, an additional pocket far from the expected kinase/ligase catalytic site, specifically recognizes the cytosine and ribose portions of the product inhibitor.</text>
</comment>
<comment type="similarity">
    <text evidence="1">Belongs to the CTP synthase family.</text>
</comment>
<accession>B9MEQ7</accession>
<protein>
    <recommendedName>
        <fullName evidence="1">CTP synthase</fullName>
        <ecNumber evidence="1">6.3.4.2</ecNumber>
    </recommendedName>
    <alternativeName>
        <fullName evidence="1">Cytidine 5'-triphosphate synthase</fullName>
    </alternativeName>
    <alternativeName>
        <fullName evidence="1">Cytidine triphosphate synthetase</fullName>
        <shortName evidence="1">CTP synthetase</shortName>
        <shortName evidence="1">CTPS</shortName>
    </alternativeName>
    <alternativeName>
        <fullName evidence="1">UTP--ammonia ligase</fullName>
    </alternativeName>
</protein>
<evidence type="ECO:0000255" key="1">
    <source>
        <dbReference type="HAMAP-Rule" id="MF_01227"/>
    </source>
</evidence>
<dbReference type="EC" id="6.3.4.2" evidence="1"/>
<dbReference type="EMBL" id="CP001392">
    <property type="protein sequence ID" value="ACM32393.1"/>
    <property type="molecule type" value="Genomic_DNA"/>
</dbReference>
<dbReference type="RefSeq" id="WP_015912646.1">
    <property type="nucleotide sequence ID" value="NC_011992.1"/>
</dbReference>
<dbReference type="SMR" id="B9MEQ7"/>
<dbReference type="KEGG" id="dia:Dtpsy_0915"/>
<dbReference type="eggNOG" id="COG0504">
    <property type="taxonomic scope" value="Bacteria"/>
</dbReference>
<dbReference type="HOGENOM" id="CLU_011675_5_0_4"/>
<dbReference type="UniPathway" id="UPA00159">
    <property type="reaction ID" value="UER00277"/>
</dbReference>
<dbReference type="Proteomes" id="UP000000450">
    <property type="component" value="Chromosome"/>
</dbReference>
<dbReference type="GO" id="GO:0005829">
    <property type="term" value="C:cytosol"/>
    <property type="evidence" value="ECO:0007669"/>
    <property type="project" value="TreeGrafter"/>
</dbReference>
<dbReference type="GO" id="GO:0005524">
    <property type="term" value="F:ATP binding"/>
    <property type="evidence" value="ECO:0007669"/>
    <property type="project" value="UniProtKB-KW"/>
</dbReference>
<dbReference type="GO" id="GO:0003883">
    <property type="term" value="F:CTP synthase activity"/>
    <property type="evidence" value="ECO:0007669"/>
    <property type="project" value="UniProtKB-UniRule"/>
</dbReference>
<dbReference type="GO" id="GO:0004359">
    <property type="term" value="F:glutaminase activity"/>
    <property type="evidence" value="ECO:0007669"/>
    <property type="project" value="RHEA"/>
</dbReference>
<dbReference type="GO" id="GO:0042802">
    <property type="term" value="F:identical protein binding"/>
    <property type="evidence" value="ECO:0007669"/>
    <property type="project" value="TreeGrafter"/>
</dbReference>
<dbReference type="GO" id="GO:0046872">
    <property type="term" value="F:metal ion binding"/>
    <property type="evidence" value="ECO:0007669"/>
    <property type="project" value="UniProtKB-KW"/>
</dbReference>
<dbReference type="GO" id="GO:0044210">
    <property type="term" value="P:'de novo' CTP biosynthetic process"/>
    <property type="evidence" value="ECO:0007669"/>
    <property type="project" value="UniProtKB-UniRule"/>
</dbReference>
<dbReference type="GO" id="GO:0019856">
    <property type="term" value="P:pyrimidine nucleobase biosynthetic process"/>
    <property type="evidence" value="ECO:0007669"/>
    <property type="project" value="TreeGrafter"/>
</dbReference>
<dbReference type="CDD" id="cd03113">
    <property type="entry name" value="CTPS_N"/>
    <property type="match status" value="1"/>
</dbReference>
<dbReference type="CDD" id="cd01746">
    <property type="entry name" value="GATase1_CTP_Synthase"/>
    <property type="match status" value="1"/>
</dbReference>
<dbReference type="FunFam" id="3.40.50.300:FF:000009">
    <property type="entry name" value="CTP synthase"/>
    <property type="match status" value="1"/>
</dbReference>
<dbReference type="FunFam" id="3.40.50.880:FF:000002">
    <property type="entry name" value="CTP synthase"/>
    <property type="match status" value="1"/>
</dbReference>
<dbReference type="Gene3D" id="3.40.50.880">
    <property type="match status" value="1"/>
</dbReference>
<dbReference type="Gene3D" id="3.40.50.300">
    <property type="entry name" value="P-loop containing nucleotide triphosphate hydrolases"/>
    <property type="match status" value="1"/>
</dbReference>
<dbReference type="HAMAP" id="MF_01227">
    <property type="entry name" value="PyrG"/>
    <property type="match status" value="1"/>
</dbReference>
<dbReference type="InterPro" id="IPR029062">
    <property type="entry name" value="Class_I_gatase-like"/>
</dbReference>
<dbReference type="InterPro" id="IPR004468">
    <property type="entry name" value="CTP_synthase"/>
</dbReference>
<dbReference type="InterPro" id="IPR017456">
    <property type="entry name" value="CTP_synthase_N"/>
</dbReference>
<dbReference type="InterPro" id="IPR017926">
    <property type="entry name" value="GATASE"/>
</dbReference>
<dbReference type="InterPro" id="IPR033828">
    <property type="entry name" value="GATase1_CTP_Synthase"/>
</dbReference>
<dbReference type="InterPro" id="IPR027417">
    <property type="entry name" value="P-loop_NTPase"/>
</dbReference>
<dbReference type="NCBIfam" id="NF003792">
    <property type="entry name" value="PRK05380.1"/>
    <property type="match status" value="1"/>
</dbReference>
<dbReference type="NCBIfam" id="TIGR00337">
    <property type="entry name" value="PyrG"/>
    <property type="match status" value="1"/>
</dbReference>
<dbReference type="PANTHER" id="PTHR11550">
    <property type="entry name" value="CTP SYNTHASE"/>
    <property type="match status" value="1"/>
</dbReference>
<dbReference type="PANTHER" id="PTHR11550:SF0">
    <property type="entry name" value="CTP SYNTHASE-RELATED"/>
    <property type="match status" value="1"/>
</dbReference>
<dbReference type="Pfam" id="PF06418">
    <property type="entry name" value="CTP_synth_N"/>
    <property type="match status" value="1"/>
</dbReference>
<dbReference type="Pfam" id="PF00117">
    <property type="entry name" value="GATase"/>
    <property type="match status" value="1"/>
</dbReference>
<dbReference type="SUPFAM" id="SSF52317">
    <property type="entry name" value="Class I glutamine amidotransferase-like"/>
    <property type="match status" value="1"/>
</dbReference>
<dbReference type="SUPFAM" id="SSF52540">
    <property type="entry name" value="P-loop containing nucleoside triphosphate hydrolases"/>
    <property type="match status" value="1"/>
</dbReference>
<dbReference type="PROSITE" id="PS51273">
    <property type="entry name" value="GATASE_TYPE_1"/>
    <property type="match status" value="1"/>
</dbReference>